<dbReference type="EC" id="3.6.1.1" evidence="1"/>
<dbReference type="EMBL" id="CP001407">
    <property type="protein sequence ID" value="ACO31246.1"/>
    <property type="molecule type" value="Genomic_DNA"/>
</dbReference>
<dbReference type="RefSeq" id="WP_000416848.1">
    <property type="nucleotide sequence ID" value="NZ_CP009318.1"/>
</dbReference>
<dbReference type="SMR" id="C1EXV7"/>
<dbReference type="KEGG" id="bcx:BCA_2907"/>
<dbReference type="PATRIC" id="fig|572264.18.peg.2857"/>
<dbReference type="Proteomes" id="UP000002210">
    <property type="component" value="Chromosome"/>
</dbReference>
<dbReference type="GO" id="GO:0005737">
    <property type="term" value="C:cytoplasm"/>
    <property type="evidence" value="ECO:0007669"/>
    <property type="project" value="UniProtKB-SubCell"/>
</dbReference>
<dbReference type="GO" id="GO:0004427">
    <property type="term" value="F:inorganic diphosphate phosphatase activity"/>
    <property type="evidence" value="ECO:0007669"/>
    <property type="project" value="UniProtKB-UniRule"/>
</dbReference>
<dbReference type="GO" id="GO:0030145">
    <property type="term" value="F:manganese ion binding"/>
    <property type="evidence" value="ECO:0007669"/>
    <property type="project" value="UniProtKB-UniRule"/>
</dbReference>
<dbReference type="FunFam" id="3.10.310.20:FF:000001">
    <property type="entry name" value="Probable manganese-dependent inorganic pyrophosphatase"/>
    <property type="match status" value="1"/>
</dbReference>
<dbReference type="FunFam" id="3.90.1640.10:FF:000001">
    <property type="entry name" value="Probable manganese-dependent inorganic pyrophosphatase"/>
    <property type="match status" value="1"/>
</dbReference>
<dbReference type="Gene3D" id="3.10.310.20">
    <property type="entry name" value="DHHA2 domain"/>
    <property type="match status" value="1"/>
</dbReference>
<dbReference type="Gene3D" id="3.90.1640.10">
    <property type="entry name" value="inorganic pyrophosphatase (n-terminal core)"/>
    <property type="match status" value="1"/>
</dbReference>
<dbReference type="HAMAP" id="MF_00207">
    <property type="entry name" value="PPase_C"/>
    <property type="match status" value="1"/>
</dbReference>
<dbReference type="InterPro" id="IPR001667">
    <property type="entry name" value="DDH_dom"/>
</dbReference>
<dbReference type="InterPro" id="IPR038763">
    <property type="entry name" value="DHH_sf"/>
</dbReference>
<dbReference type="InterPro" id="IPR004097">
    <property type="entry name" value="DHHA2"/>
</dbReference>
<dbReference type="InterPro" id="IPR038222">
    <property type="entry name" value="DHHA2_dom_sf"/>
</dbReference>
<dbReference type="InterPro" id="IPR022934">
    <property type="entry name" value="Mn-dep_inorganic_PyrPase"/>
</dbReference>
<dbReference type="NCBIfam" id="NF003877">
    <property type="entry name" value="PRK05427.1"/>
    <property type="match status" value="1"/>
</dbReference>
<dbReference type="PANTHER" id="PTHR12112">
    <property type="entry name" value="BNIP - RELATED"/>
    <property type="match status" value="1"/>
</dbReference>
<dbReference type="PANTHER" id="PTHR12112:SF22">
    <property type="entry name" value="MANGANESE-DEPENDENT INORGANIC PYROPHOSPHATASE-RELATED"/>
    <property type="match status" value="1"/>
</dbReference>
<dbReference type="Pfam" id="PF01368">
    <property type="entry name" value="DHH"/>
    <property type="match status" value="1"/>
</dbReference>
<dbReference type="Pfam" id="PF02833">
    <property type="entry name" value="DHHA2"/>
    <property type="match status" value="1"/>
</dbReference>
<dbReference type="SMART" id="SM01131">
    <property type="entry name" value="DHHA2"/>
    <property type="match status" value="1"/>
</dbReference>
<dbReference type="SUPFAM" id="SSF64182">
    <property type="entry name" value="DHH phosphoesterases"/>
    <property type="match status" value="1"/>
</dbReference>
<feature type="chain" id="PRO_1000124653" description="Probable manganese-dependent inorganic pyrophosphatase">
    <location>
        <begin position="1"/>
        <end position="309"/>
    </location>
</feature>
<feature type="binding site" evidence="1">
    <location>
        <position position="9"/>
    </location>
    <ligand>
        <name>Mn(2+)</name>
        <dbReference type="ChEBI" id="CHEBI:29035"/>
        <label>1</label>
    </ligand>
</feature>
<feature type="binding site" evidence="1">
    <location>
        <position position="13"/>
    </location>
    <ligand>
        <name>Mn(2+)</name>
        <dbReference type="ChEBI" id="CHEBI:29035"/>
        <label>1</label>
    </ligand>
</feature>
<feature type="binding site" evidence="1">
    <location>
        <position position="15"/>
    </location>
    <ligand>
        <name>Mn(2+)</name>
        <dbReference type="ChEBI" id="CHEBI:29035"/>
        <label>2</label>
    </ligand>
</feature>
<feature type="binding site" evidence="1">
    <location>
        <position position="75"/>
    </location>
    <ligand>
        <name>Mn(2+)</name>
        <dbReference type="ChEBI" id="CHEBI:29035"/>
        <label>1</label>
    </ligand>
</feature>
<feature type="binding site" evidence="1">
    <location>
        <position position="75"/>
    </location>
    <ligand>
        <name>Mn(2+)</name>
        <dbReference type="ChEBI" id="CHEBI:29035"/>
        <label>2</label>
    </ligand>
</feature>
<feature type="binding site" evidence="1">
    <location>
        <position position="97"/>
    </location>
    <ligand>
        <name>Mn(2+)</name>
        <dbReference type="ChEBI" id="CHEBI:29035"/>
        <label>2</label>
    </ligand>
</feature>
<feature type="binding site" evidence="1">
    <location>
        <position position="149"/>
    </location>
    <ligand>
        <name>Mn(2+)</name>
        <dbReference type="ChEBI" id="CHEBI:29035"/>
        <label>2</label>
    </ligand>
</feature>
<reference key="1">
    <citation type="submission" date="2009-02" db="EMBL/GenBank/DDBJ databases">
        <title>Genome sequence of Bacillus cereus 03BB102.</title>
        <authorList>
            <person name="Dodson R.J."/>
            <person name="Jackson P."/>
            <person name="Munk A.C."/>
            <person name="Brettin T."/>
            <person name="Bruce D."/>
            <person name="Detter C."/>
            <person name="Tapia R."/>
            <person name="Han C."/>
            <person name="Sutton G."/>
            <person name="Sims D."/>
        </authorList>
    </citation>
    <scope>NUCLEOTIDE SEQUENCE [LARGE SCALE GENOMIC DNA]</scope>
    <source>
        <strain>03BB102</strain>
    </source>
</reference>
<accession>C1EXV7</accession>
<protein>
    <recommendedName>
        <fullName evidence="1">Probable manganese-dependent inorganic pyrophosphatase</fullName>
        <ecNumber evidence="1">3.6.1.1</ecNumber>
    </recommendedName>
    <alternativeName>
        <fullName evidence="1">Pyrophosphate phospho-hydrolase</fullName>
        <shortName evidence="1">PPase</shortName>
    </alternativeName>
</protein>
<proteinExistence type="inferred from homology"/>
<organism>
    <name type="scientific">Bacillus cereus (strain 03BB102)</name>
    <dbReference type="NCBI Taxonomy" id="572264"/>
    <lineage>
        <taxon>Bacteria</taxon>
        <taxon>Bacillati</taxon>
        <taxon>Bacillota</taxon>
        <taxon>Bacilli</taxon>
        <taxon>Bacillales</taxon>
        <taxon>Bacillaceae</taxon>
        <taxon>Bacillus</taxon>
        <taxon>Bacillus cereus group</taxon>
    </lineage>
</organism>
<name>PPAC_BACC3</name>
<comment type="catalytic activity">
    <reaction evidence="1">
        <text>diphosphate + H2O = 2 phosphate + H(+)</text>
        <dbReference type="Rhea" id="RHEA:24576"/>
        <dbReference type="ChEBI" id="CHEBI:15377"/>
        <dbReference type="ChEBI" id="CHEBI:15378"/>
        <dbReference type="ChEBI" id="CHEBI:33019"/>
        <dbReference type="ChEBI" id="CHEBI:43474"/>
        <dbReference type="EC" id="3.6.1.1"/>
    </reaction>
</comment>
<comment type="cofactor">
    <cofactor evidence="1">
        <name>Mn(2+)</name>
        <dbReference type="ChEBI" id="CHEBI:29035"/>
    </cofactor>
    <text evidence="1">Binds 2 manganese ions per subunit.</text>
</comment>
<comment type="subcellular location">
    <subcellularLocation>
        <location evidence="1">Cytoplasm</location>
    </subcellularLocation>
</comment>
<comment type="similarity">
    <text evidence="1">Belongs to the PPase class C family.</text>
</comment>
<evidence type="ECO:0000255" key="1">
    <source>
        <dbReference type="HAMAP-Rule" id="MF_00207"/>
    </source>
</evidence>
<sequence length="309" mass="33788">MEKVLVFGHKNPDTDAICSAIAYAELKKELGMNAEPVRLGEISGETQFALDYFKVEGPRFVETVANEVDNVILVDHNERQQSANDIESVRVLEVIDHHRIANFETSDPIYYRCEPVGCTATILNKMYKENGVTIRKEVAGLMLSAIISDSLLFKSPTCTEQDVAAARELAEIADVDADNYGLEMLKAGADLSGKTMEQLISLDAKEFQMGNAKVEIAQVNAVDTNDVLVHQAELEKVISAVVEEKGLDLFLFVVTDILTNDSVGLAIGKAANVVEKAYNVPLENNTATLKGVVSRKKQIVPVLTEAFQA</sequence>
<keyword id="KW-0963">Cytoplasm</keyword>
<keyword id="KW-0378">Hydrolase</keyword>
<keyword id="KW-0464">Manganese</keyword>
<keyword id="KW-0479">Metal-binding</keyword>
<gene>
    <name evidence="1" type="primary">ppaC</name>
    <name type="ordered locus">BCA_2907</name>
</gene>